<protein>
    <recommendedName>
        <fullName evidence="4">Mu-conotoxin-like Am3.3</fullName>
    </recommendedName>
</protein>
<organism>
    <name type="scientific">Conus amadis</name>
    <name type="common">Amadis cone</name>
    <dbReference type="NCBI Taxonomy" id="198732"/>
    <lineage>
        <taxon>Eukaryota</taxon>
        <taxon>Metazoa</taxon>
        <taxon>Spiralia</taxon>
        <taxon>Lophotrochozoa</taxon>
        <taxon>Mollusca</taxon>
        <taxon>Gastropoda</taxon>
        <taxon>Caenogastropoda</taxon>
        <taxon>Neogastropoda</taxon>
        <taxon>Conoidea</taxon>
        <taxon>Conidae</taxon>
        <taxon>Conus</taxon>
        <taxon>Leptoconus</taxon>
    </lineage>
</organism>
<dbReference type="EMBL" id="MH282818">
    <property type="protein sequence ID" value="AYP73025.1"/>
    <property type="molecule type" value="mRNA"/>
</dbReference>
<dbReference type="GO" id="GO:0005576">
    <property type="term" value="C:extracellular region"/>
    <property type="evidence" value="ECO:0007669"/>
    <property type="project" value="UniProtKB-SubCell"/>
</dbReference>
<dbReference type="GO" id="GO:0008200">
    <property type="term" value="F:ion channel inhibitor activity"/>
    <property type="evidence" value="ECO:0007669"/>
    <property type="project" value="InterPro"/>
</dbReference>
<dbReference type="GO" id="GO:0017080">
    <property type="term" value="F:sodium channel regulator activity"/>
    <property type="evidence" value="ECO:0007669"/>
    <property type="project" value="UniProtKB-KW"/>
</dbReference>
<dbReference type="GO" id="GO:0090729">
    <property type="term" value="F:toxin activity"/>
    <property type="evidence" value="ECO:0007669"/>
    <property type="project" value="UniProtKB-KW"/>
</dbReference>
<dbReference type="InterPro" id="IPR004214">
    <property type="entry name" value="Conotoxin"/>
</dbReference>
<dbReference type="Pfam" id="PF02950">
    <property type="entry name" value="Conotoxin"/>
    <property type="match status" value="1"/>
</dbReference>
<name>CM33_CONAA</name>
<comment type="function">
    <text evidence="1">Mu-conotoxins block voltage-gated sodium channels (Nav).</text>
</comment>
<comment type="subcellular location">
    <subcellularLocation>
        <location evidence="3">Secreted</location>
    </subcellularLocation>
</comment>
<comment type="tissue specificity">
    <text evidence="5">Expressed by the venom duct.</text>
</comment>
<comment type="domain">
    <text evidence="4">The cysteine framework is III (CC-C-C-CC). Classified in the M-2 branch, since 2 residues stand between the fourth and the fifth cysteine residues.</text>
</comment>
<comment type="PTM">
    <text evidence="3">Is not hydroxylated.</text>
</comment>
<comment type="PTM">
    <text evidence="4">Contains 3 disulfide bonds.</text>
</comment>
<comment type="similarity">
    <text evidence="4">Belongs to the conotoxin M family.</text>
</comment>
<proteinExistence type="evidence at protein level"/>
<evidence type="ECO:0000250" key="1">
    <source>
        <dbReference type="UniProtKB" id="P58927"/>
    </source>
</evidence>
<evidence type="ECO:0000255" key="2"/>
<evidence type="ECO:0000269" key="3">
    <source>
    </source>
</evidence>
<evidence type="ECO:0000305" key="4"/>
<evidence type="ECO:0000305" key="5">
    <source>
    </source>
</evidence>
<accession>A0A3G3C7V7</accession>
<feature type="signal peptide" evidence="2">
    <location>
        <begin position="1"/>
        <end position="20"/>
    </location>
</feature>
<feature type="propeptide" id="PRO_0000453592" evidence="5">
    <location>
        <begin position="21"/>
        <end position="52"/>
    </location>
</feature>
<feature type="peptide" id="PRO_5017982598" description="Mu-conotoxin-like Am3.3" evidence="3">
    <location>
        <begin position="53"/>
        <end position="68"/>
    </location>
</feature>
<feature type="modified residue" description="Cysteine amide" evidence="3">
    <location>
        <position position="68"/>
    </location>
</feature>
<reference key="1">
    <citation type="journal article" date="2019" name="J. Proteomics">
        <title>Cone snail prolyl-4-hydroxylase alpha-subunit sequences derived from transcriptomic data and mass spectrometric analysis of variable proline hydroxylation in C. amadis venom.</title>
        <authorList>
            <person name="Vijayasarathy M."/>
            <person name="Balaram P."/>
        </authorList>
    </citation>
    <scope>NUCLEOTIDE SEQUENCE [MRNA]</scope>
    <scope>PROTEIN SEQUENCE OF 53-68</scope>
    <scope>SUBCELLULAR LOCATION</scope>
    <scope>IDENTIFICATION BY MASS SPECTROMETRY</scope>
    <scope>AMIDATION AT CYS-68</scope>
    <source>
        <tissue>Venom</tissue>
        <tissue>Venom duct</tissue>
    </source>
</reference>
<sequence>MMSKLGVLLTICLLLFPLTAVPLDGDQPADRPAERMQDDISSENHPMFDAIRGCCMPLSCMLLCEPCCG</sequence>
<keyword id="KW-0027">Amidation</keyword>
<keyword id="KW-0903">Direct protein sequencing</keyword>
<keyword id="KW-1015">Disulfide bond</keyword>
<keyword id="KW-0872">Ion channel impairing toxin</keyword>
<keyword id="KW-0528">Neurotoxin</keyword>
<keyword id="KW-0964">Secreted</keyword>
<keyword id="KW-0732">Signal</keyword>
<keyword id="KW-0800">Toxin</keyword>
<keyword id="KW-0738">Voltage-gated sodium channel impairing toxin</keyword>